<feature type="chain" id="PRO_0000165828" description="Probable aminopeptidase NPEPL1">
    <location>
        <begin position="1"/>
        <end position="523"/>
    </location>
</feature>
<feature type="active site" evidence="2">
    <location>
        <position position="272"/>
    </location>
</feature>
<feature type="active site" evidence="2">
    <location>
        <position position="346"/>
    </location>
</feature>
<feature type="binding site" evidence="1">
    <location>
        <position position="260"/>
    </location>
    <ligand>
        <name>Zn(2+)</name>
        <dbReference type="ChEBI" id="CHEBI:29105"/>
        <label>2</label>
    </ligand>
</feature>
<feature type="binding site" evidence="1">
    <location>
        <position position="265"/>
    </location>
    <ligand>
        <name>Zn(2+)</name>
        <dbReference type="ChEBI" id="CHEBI:29105"/>
        <label>1</label>
    </ligand>
</feature>
<feature type="binding site" evidence="1">
    <location>
        <position position="265"/>
    </location>
    <ligand>
        <name>Zn(2+)</name>
        <dbReference type="ChEBI" id="CHEBI:29105"/>
        <label>2</label>
    </ligand>
</feature>
<feature type="binding site" evidence="1">
    <location>
        <position position="283"/>
    </location>
    <ligand>
        <name>Zn(2+)</name>
        <dbReference type="ChEBI" id="CHEBI:29105"/>
        <label>2</label>
    </ligand>
</feature>
<feature type="binding site" evidence="1">
    <location>
        <position position="342"/>
    </location>
    <ligand>
        <name>Zn(2+)</name>
        <dbReference type="ChEBI" id="CHEBI:29105"/>
        <label>1</label>
    </ligand>
</feature>
<feature type="binding site" evidence="1">
    <location>
        <position position="344"/>
    </location>
    <ligand>
        <name>Zn(2+)</name>
        <dbReference type="ChEBI" id="CHEBI:29105"/>
        <label>1</label>
    </ligand>
</feature>
<feature type="binding site" evidence="1">
    <location>
        <position position="344"/>
    </location>
    <ligand>
        <name>Zn(2+)</name>
        <dbReference type="ChEBI" id="CHEBI:29105"/>
        <label>2</label>
    </ligand>
</feature>
<feature type="splice variant" id="VSP_044526" description="In isoform 4." evidence="8">
    <original>MANVGLQFQASAGDSDPQSRPLLLLGQLHHLHRVPWSHVRGKLQPRVTEE</original>
    <variation>MELHGGNRGGYQPKALEQSGCW</variation>
    <location>
        <begin position="1"/>
        <end position="50"/>
    </location>
</feature>
<feature type="splice variant" id="VSP_044527" description="In isoform 5." evidence="8">
    <original>MANVGLQFQASAGDSDPQSRPLLLLGQLHHLHRVPWSHVRGKLQPRVTE</original>
    <variation>M</variation>
    <location>
        <begin position="1"/>
        <end position="49"/>
    </location>
</feature>
<feature type="splice variant" id="VSP_007251" description="In isoform 3." evidence="9">
    <original>TVEINNTDAEGRLVLADGVSYACKDLGADIILDMATLTGAQGIATGKYHAAVLTNSAEW</original>
    <variation>YVWPSHSFLPTVGTRDPSRPAMPAHSRHIGRALSVGVPWAAGSLLPGGLGSFGSRRTSR</variation>
    <location>
        <begin position="335"/>
        <end position="393"/>
    </location>
</feature>
<feature type="splice variant" id="VSP_007253" description="In isoform 2." evidence="7">
    <original>GIATGKYHAAVLTNSAEWEAACVKAGRKCGDLVHPLV</original>
    <variation>VSAPWIHPLAVVPGNPTPLLTSRWGRQRVGAAVRKFS</variation>
    <location>
        <begin position="376"/>
        <end position="412"/>
    </location>
</feature>
<feature type="splice variant" id="VSP_007252" description="In isoform 3." evidence="9">
    <location>
        <begin position="394"/>
        <end position="523"/>
    </location>
</feature>
<feature type="splice variant" id="VSP_007254" description="In isoform 2." evidence="7">
    <location>
        <begin position="413"/>
        <end position="523"/>
    </location>
</feature>
<feature type="sequence variant" id="VAR_059756" description="In dbSNP:rs8116292.">
    <original>K</original>
    <variation>R</variation>
    <location>
        <position position="303"/>
    </location>
</feature>
<feature type="sequence variant" id="VAR_059757" description="In dbSNP:rs6026468." evidence="4 5 6">
    <original>L</original>
    <variation>V</variation>
    <location>
        <position position="513"/>
    </location>
</feature>
<feature type="sequence conflict" description="In Ref. 2; BAD96814." evidence="10" ref="2">
    <original>N</original>
    <variation>S</variation>
    <location>
        <position position="87"/>
    </location>
</feature>
<feature type="sequence conflict" description="In Ref. 1; AK307771." evidence="10" ref="1">
    <original>V</original>
    <variation>L</variation>
    <location>
        <position position="151"/>
    </location>
</feature>
<feature type="sequence conflict" description="In Ref. 1; BAB13861." evidence="10" ref="1">
    <original>V</original>
    <variation>A</variation>
    <location>
        <position position="204"/>
    </location>
</feature>
<feature type="sequence conflict" description="In Ref. 1; BAB13861." evidence="10" ref="1">
    <original>R</original>
    <variation>G</variation>
    <location>
        <position position="323"/>
    </location>
</feature>
<feature type="sequence conflict" description="In Ref. 1; BAG60029." evidence="10" ref="1">
    <original>L</original>
    <variation>P</variation>
    <location>
        <position position="502"/>
    </location>
</feature>
<name>PEPL1_HUMAN</name>
<protein>
    <recommendedName>
        <fullName>Probable aminopeptidase NPEPL1</fullName>
        <ecNumber>3.4.11.-</ecNumber>
    </recommendedName>
    <alternativeName>
        <fullName>Aminopeptidase-like 1</fullName>
    </alternativeName>
</protein>
<proteinExistence type="evidence at protein level"/>
<accession>Q8NDH3</accession>
<accession>A6NGZ0</accession>
<accession>B4DMW7</accession>
<accession>B7ZBN0</accession>
<accession>E9PN47</accession>
<accession>G5EA34</accession>
<accession>Q53G37</accession>
<accession>Q5W083</accession>
<accession>Q8TF28</accession>
<accession>Q8WUI2</accession>
<accession>Q9H1T6</accession>
<accession>Q9HAI5</accession>
<keyword id="KW-0025">Alternative splicing</keyword>
<keyword id="KW-0031">Aminopeptidase</keyword>
<keyword id="KW-0378">Hydrolase</keyword>
<keyword id="KW-0464">Manganese</keyword>
<keyword id="KW-0479">Metal-binding</keyword>
<keyword id="KW-0645">Protease</keyword>
<keyword id="KW-1267">Proteomics identification</keyword>
<keyword id="KW-1185">Reference proteome</keyword>
<keyword id="KW-0862">Zinc</keyword>
<dbReference type="EC" id="3.4.11.-"/>
<dbReference type="EMBL" id="AK021645">
    <property type="protein sequence ID" value="BAB13861.1"/>
    <property type="status" value="ALT_FRAME"/>
    <property type="molecule type" value="mRNA"/>
</dbReference>
<dbReference type="EMBL" id="AK297667">
    <property type="protein sequence ID" value="BAG60029.1"/>
    <property type="molecule type" value="mRNA"/>
</dbReference>
<dbReference type="EMBL" id="AK307771">
    <property type="status" value="NOT_ANNOTATED_CDS"/>
    <property type="molecule type" value="mRNA"/>
</dbReference>
<dbReference type="EMBL" id="AK223094">
    <property type="protein sequence ID" value="BAD96814.1"/>
    <property type="molecule type" value="mRNA"/>
</dbReference>
<dbReference type="EMBL" id="AL139349">
    <property type="status" value="NOT_ANNOTATED_CDS"/>
    <property type="molecule type" value="Genomic_DNA"/>
</dbReference>
<dbReference type="EMBL" id="CH471077">
    <property type="protein sequence ID" value="EAW75479.1"/>
    <property type="molecule type" value="Genomic_DNA"/>
</dbReference>
<dbReference type="EMBL" id="BC020507">
    <property type="protein sequence ID" value="AAH20507.2"/>
    <property type="molecule type" value="mRNA"/>
</dbReference>
<dbReference type="EMBL" id="AB075854">
    <property type="protein sequence ID" value="BAB85560.1"/>
    <property type="molecule type" value="mRNA"/>
</dbReference>
<dbReference type="EMBL" id="AL833971">
    <property type="protein sequence ID" value="CAD38816.2"/>
    <property type="status" value="ALT_FRAME"/>
    <property type="molecule type" value="mRNA"/>
</dbReference>
<dbReference type="CCDS" id="CCDS46621.1">
    <molecule id="Q8NDH3-1"/>
</dbReference>
<dbReference type="CCDS" id="CCDS56200.1">
    <molecule id="Q8NDH3-4"/>
</dbReference>
<dbReference type="CCDS" id="CCDS56201.1">
    <molecule id="Q8NDH3-5"/>
</dbReference>
<dbReference type="RefSeq" id="NP_001191801.1">
    <molecule id="Q8NDH3-4"/>
    <property type="nucleotide sequence ID" value="NM_001204872.2"/>
</dbReference>
<dbReference type="RefSeq" id="NP_001191802.1">
    <molecule id="Q8NDH3-5"/>
    <property type="nucleotide sequence ID" value="NM_001204873.2"/>
</dbReference>
<dbReference type="RefSeq" id="NP_078939.3">
    <molecule id="Q8NDH3-1"/>
    <property type="nucleotide sequence ID" value="NM_024663.3"/>
</dbReference>
<dbReference type="SMR" id="Q8NDH3"/>
<dbReference type="BioGRID" id="122832">
    <property type="interactions" value="42"/>
</dbReference>
<dbReference type="FunCoup" id="Q8NDH3">
    <property type="interactions" value="1559"/>
</dbReference>
<dbReference type="IntAct" id="Q8NDH3">
    <property type="interactions" value="6"/>
</dbReference>
<dbReference type="STRING" id="9606.ENSP00000348395"/>
<dbReference type="ChEMBL" id="CHEMBL3831223"/>
<dbReference type="MEROPS" id="M17.006"/>
<dbReference type="GlyGen" id="Q8NDH3">
    <property type="glycosylation" value="1 site, 1 N-linked glycan (1 site)"/>
</dbReference>
<dbReference type="iPTMnet" id="Q8NDH3"/>
<dbReference type="PhosphoSitePlus" id="Q8NDH3"/>
<dbReference type="SwissPalm" id="Q8NDH3"/>
<dbReference type="BioMuta" id="NPEPL1"/>
<dbReference type="DMDM" id="68847034"/>
<dbReference type="jPOST" id="Q8NDH3"/>
<dbReference type="MassIVE" id="Q8NDH3"/>
<dbReference type="PaxDb" id="9606-ENSP00000348395"/>
<dbReference type="PeptideAtlas" id="Q8NDH3"/>
<dbReference type="ProteomicsDB" id="22305"/>
<dbReference type="ProteomicsDB" id="34124"/>
<dbReference type="ProteomicsDB" id="73027">
    <molecule id="Q8NDH3-1"/>
</dbReference>
<dbReference type="ProteomicsDB" id="73028">
    <molecule id="Q8NDH3-2"/>
</dbReference>
<dbReference type="ProteomicsDB" id="73029">
    <molecule id="Q8NDH3-3"/>
</dbReference>
<dbReference type="Pumba" id="Q8NDH3"/>
<dbReference type="Antibodypedia" id="29150">
    <property type="antibodies" value="76 antibodies from 21 providers"/>
</dbReference>
<dbReference type="DNASU" id="79716"/>
<dbReference type="Ensembl" id="ENST00000356091.11">
    <molecule id="Q8NDH3-1"/>
    <property type="protein sequence ID" value="ENSP00000348395.6"/>
    <property type="gene ID" value="ENSG00000215440.12"/>
</dbReference>
<dbReference type="Ensembl" id="ENST00000525817.5">
    <molecule id="Q8NDH3-5"/>
    <property type="protein sequence ID" value="ENSP00000437112.1"/>
    <property type="gene ID" value="ENSG00000215440.12"/>
</dbReference>
<dbReference type="Ensembl" id="ENST00000525967.5">
    <molecule id="Q8NDH3-4"/>
    <property type="protein sequence ID" value="ENSP00000434810.1"/>
    <property type="gene ID" value="ENSG00000215440.12"/>
</dbReference>
<dbReference type="GeneID" id="79716"/>
<dbReference type="KEGG" id="hsa:79716"/>
<dbReference type="MANE-Select" id="ENST00000356091.11">
    <property type="protein sequence ID" value="ENSP00000348395.6"/>
    <property type="RefSeq nucleotide sequence ID" value="NM_024663.4"/>
    <property type="RefSeq protein sequence ID" value="NP_078939.3"/>
</dbReference>
<dbReference type="UCSC" id="uc010gjo.3">
    <molecule id="Q8NDH3-1"/>
    <property type="organism name" value="human"/>
</dbReference>
<dbReference type="AGR" id="HGNC:16244"/>
<dbReference type="CTD" id="79716"/>
<dbReference type="DisGeNET" id="79716"/>
<dbReference type="GeneCards" id="NPEPL1"/>
<dbReference type="HGNC" id="HGNC:16244">
    <property type="gene designation" value="NPEPL1"/>
</dbReference>
<dbReference type="HPA" id="ENSG00000215440">
    <property type="expression patterns" value="Low tissue specificity"/>
</dbReference>
<dbReference type="neXtProt" id="NX_Q8NDH3"/>
<dbReference type="OpenTargets" id="ENSG00000215440"/>
<dbReference type="PharmGKB" id="PA31702"/>
<dbReference type="VEuPathDB" id="HostDB:ENSG00000215440"/>
<dbReference type="eggNOG" id="KOG2597">
    <property type="taxonomic scope" value="Eukaryota"/>
</dbReference>
<dbReference type="GeneTree" id="ENSGT00530000063255"/>
<dbReference type="HOGENOM" id="CLU_013734_3_1_1"/>
<dbReference type="InParanoid" id="Q8NDH3"/>
<dbReference type="OMA" id="MVCEQSD"/>
<dbReference type="OrthoDB" id="412814at2759"/>
<dbReference type="PAN-GO" id="Q8NDH3">
    <property type="GO annotations" value="3 GO annotations based on evolutionary models"/>
</dbReference>
<dbReference type="PhylomeDB" id="Q8NDH3"/>
<dbReference type="TreeFam" id="TF314954"/>
<dbReference type="PathwayCommons" id="Q8NDH3"/>
<dbReference type="SignaLink" id="Q8NDH3"/>
<dbReference type="BioGRID-ORCS" id="79716">
    <property type="hits" value="18 hits in 1156 CRISPR screens"/>
</dbReference>
<dbReference type="GenomeRNAi" id="79716"/>
<dbReference type="Pharos" id="Q8NDH3">
    <property type="development level" value="Tdark"/>
</dbReference>
<dbReference type="PRO" id="PR:Q8NDH3"/>
<dbReference type="Proteomes" id="UP000005640">
    <property type="component" value="Chromosome 20"/>
</dbReference>
<dbReference type="RNAct" id="Q8NDH3">
    <property type="molecule type" value="protein"/>
</dbReference>
<dbReference type="Bgee" id="ENSG00000215440">
    <property type="expression patterns" value="Expressed in mucosa of stomach and 96 other cell types or tissues"/>
</dbReference>
<dbReference type="ExpressionAtlas" id="Q8NDH3">
    <property type="expression patterns" value="baseline and differential"/>
</dbReference>
<dbReference type="GO" id="GO:0005737">
    <property type="term" value="C:cytoplasm"/>
    <property type="evidence" value="ECO:0000318"/>
    <property type="project" value="GO_Central"/>
</dbReference>
<dbReference type="GO" id="GO:0005634">
    <property type="term" value="C:nucleus"/>
    <property type="evidence" value="ECO:0007005"/>
    <property type="project" value="UniProtKB"/>
</dbReference>
<dbReference type="GO" id="GO:0030145">
    <property type="term" value="F:manganese ion binding"/>
    <property type="evidence" value="ECO:0007669"/>
    <property type="project" value="InterPro"/>
</dbReference>
<dbReference type="GO" id="GO:0070006">
    <property type="term" value="F:metalloaminopeptidase activity"/>
    <property type="evidence" value="ECO:0007669"/>
    <property type="project" value="InterPro"/>
</dbReference>
<dbReference type="GO" id="GO:0008233">
    <property type="term" value="F:peptidase activity"/>
    <property type="evidence" value="ECO:0000318"/>
    <property type="project" value="GO_Central"/>
</dbReference>
<dbReference type="GO" id="GO:0006508">
    <property type="term" value="P:proteolysis"/>
    <property type="evidence" value="ECO:0000318"/>
    <property type="project" value="GO_Central"/>
</dbReference>
<dbReference type="CDD" id="cd00433">
    <property type="entry name" value="Peptidase_M17"/>
    <property type="match status" value="1"/>
</dbReference>
<dbReference type="FunFam" id="3.40.50.10590:FF:000001">
    <property type="entry name" value="Probable aminopeptidase NPEPL1"/>
    <property type="match status" value="1"/>
</dbReference>
<dbReference type="FunFam" id="3.40.630.10:FF:000035">
    <property type="entry name" value="Probable aminopeptidase NPEPL1"/>
    <property type="match status" value="1"/>
</dbReference>
<dbReference type="Gene3D" id="3.40.630.10">
    <property type="entry name" value="Zn peptidases"/>
    <property type="match status" value="1"/>
</dbReference>
<dbReference type="Gene3D" id="3.40.50.10590">
    <property type="entry name" value="Zn-dependent exopeptidases"/>
    <property type="match status" value="1"/>
</dbReference>
<dbReference type="InterPro" id="IPR011356">
    <property type="entry name" value="Leucine_aapep/pepB"/>
</dbReference>
<dbReference type="InterPro" id="IPR041417">
    <property type="entry name" value="NPEPL1_N"/>
</dbReference>
<dbReference type="InterPro" id="IPR000819">
    <property type="entry name" value="Peptidase_M17_C"/>
</dbReference>
<dbReference type="PANTHER" id="PTHR11963:SF4">
    <property type="entry name" value="AMINOPEPTIDASE NPEPL1-RELATED"/>
    <property type="match status" value="1"/>
</dbReference>
<dbReference type="PANTHER" id="PTHR11963">
    <property type="entry name" value="LEUCINE AMINOPEPTIDASE-RELATED"/>
    <property type="match status" value="1"/>
</dbReference>
<dbReference type="Pfam" id="PF18295">
    <property type="entry name" value="Pdase_M17_N2"/>
    <property type="match status" value="1"/>
</dbReference>
<dbReference type="Pfam" id="PF00883">
    <property type="entry name" value="Peptidase_M17"/>
    <property type="match status" value="1"/>
</dbReference>
<dbReference type="PRINTS" id="PR00481">
    <property type="entry name" value="LAMNOPPTDASE"/>
</dbReference>
<dbReference type="SUPFAM" id="SSF53187">
    <property type="entry name" value="Zn-dependent exopeptidases"/>
    <property type="match status" value="1"/>
</dbReference>
<dbReference type="PROSITE" id="PS00631">
    <property type="entry name" value="CYTOSOL_AP"/>
    <property type="match status" value="1"/>
</dbReference>
<reference key="1">
    <citation type="journal article" date="2004" name="Nat. Genet.">
        <title>Complete sequencing and characterization of 21,243 full-length human cDNAs.</title>
        <authorList>
            <person name="Ota T."/>
            <person name="Suzuki Y."/>
            <person name="Nishikawa T."/>
            <person name="Otsuki T."/>
            <person name="Sugiyama T."/>
            <person name="Irie R."/>
            <person name="Wakamatsu A."/>
            <person name="Hayashi K."/>
            <person name="Sato H."/>
            <person name="Nagai K."/>
            <person name="Kimura K."/>
            <person name="Makita H."/>
            <person name="Sekine M."/>
            <person name="Obayashi M."/>
            <person name="Nishi T."/>
            <person name="Shibahara T."/>
            <person name="Tanaka T."/>
            <person name="Ishii S."/>
            <person name="Yamamoto J."/>
            <person name="Saito K."/>
            <person name="Kawai Y."/>
            <person name="Isono Y."/>
            <person name="Nakamura Y."/>
            <person name="Nagahari K."/>
            <person name="Murakami K."/>
            <person name="Yasuda T."/>
            <person name="Iwayanagi T."/>
            <person name="Wagatsuma M."/>
            <person name="Shiratori A."/>
            <person name="Sudo H."/>
            <person name="Hosoiri T."/>
            <person name="Kaku Y."/>
            <person name="Kodaira H."/>
            <person name="Kondo H."/>
            <person name="Sugawara M."/>
            <person name="Takahashi M."/>
            <person name="Kanda K."/>
            <person name="Yokoi T."/>
            <person name="Furuya T."/>
            <person name="Kikkawa E."/>
            <person name="Omura Y."/>
            <person name="Abe K."/>
            <person name="Kamihara K."/>
            <person name="Katsuta N."/>
            <person name="Sato K."/>
            <person name="Tanikawa M."/>
            <person name="Yamazaki M."/>
            <person name="Ninomiya K."/>
            <person name="Ishibashi T."/>
            <person name="Yamashita H."/>
            <person name="Murakawa K."/>
            <person name="Fujimori K."/>
            <person name="Tanai H."/>
            <person name="Kimata M."/>
            <person name="Watanabe M."/>
            <person name="Hiraoka S."/>
            <person name="Chiba Y."/>
            <person name="Ishida S."/>
            <person name="Ono Y."/>
            <person name="Takiguchi S."/>
            <person name="Watanabe S."/>
            <person name="Yosida M."/>
            <person name="Hotuta T."/>
            <person name="Kusano J."/>
            <person name="Kanehori K."/>
            <person name="Takahashi-Fujii A."/>
            <person name="Hara H."/>
            <person name="Tanase T.-O."/>
            <person name="Nomura Y."/>
            <person name="Togiya S."/>
            <person name="Komai F."/>
            <person name="Hara R."/>
            <person name="Takeuchi K."/>
            <person name="Arita M."/>
            <person name="Imose N."/>
            <person name="Musashino K."/>
            <person name="Yuuki H."/>
            <person name="Oshima A."/>
            <person name="Sasaki N."/>
            <person name="Aotsuka S."/>
            <person name="Yoshikawa Y."/>
            <person name="Matsunawa H."/>
            <person name="Ichihara T."/>
            <person name="Shiohata N."/>
            <person name="Sano S."/>
            <person name="Moriya S."/>
            <person name="Momiyama H."/>
            <person name="Satoh N."/>
            <person name="Takami S."/>
            <person name="Terashima Y."/>
            <person name="Suzuki O."/>
            <person name="Nakagawa S."/>
            <person name="Senoh A."/>
            <person name="Mizoguchi H."/>
            <person name="Goto Y."/>
            <person name="Shimizu F."/>
            <person name="Wakebe H."/>
            <person name="Hishigaki H."/>
            <person name="Watanabe T."/>
            <person name="Sugiyama A."/>
            <person name="Takemoto M."/>
            <person name="Kawakami B."/>
            <person name="Yamazaki M."/>
            <person name="Watanabe K."/>
            <person name="Kumagai A."/>
            <person name="Itakura S."/>
            <person name="Fukuzumi Y."/>
            <person name="Fujimori Y."/>
            <person name="Komiyama M."/>
            <person name="Tashiro H."/>
            <person name="Tanigami A."/>
            <person name="Fujiwara T."/>
            <person name="Ono T."/>
            <person name="Yamada K."/>
            <person name="Fujii Y."/>
            <person name="Ozaki K."/>
            <person name="Hirao M."/>
            <person name="Ohmori Y."/>
            <person name="Kawabata A."/>
            <person name="Hikiji T."/>
            <person name="Kobatake N."/>
            <person name="Inagaki H."/>
            <person name="Ikema Y."/>
            <person name="Okamoto S."/>
            <person name="Okitani R."/>
            <person name="Kawakami T."/>
            <person name="Noguchi S."/>
            <person name="Itoh T."/>
            <person name="Shigeta K."/>
            <person name="Senba T."/>
            <person name="Matsumura K."/>
            <person name="Nakajima Y."/>
            <person name="Mizuno T."/>
            <person name="Morinaga M."/>
            <person name="Sasaki M."/>
            <person name="Togashi T."/>
            <person name="Oyama M."/>
            <person name="Hata H."/>
            <person name="Watanabe M."/>
            <person name="Komatsu T."/>
            <person name="Mizushima-Sugano J."/>
            <person name="Satoh T."/>
            <person name="Shirai Y."/>
            <person name="Takahashi Y."/>
            <person name="Nakagawa K."/>
            <person name="Okumura K."/>
            <person name="Nagase T."/>
            <person name="Nomura N."/>
            <person name="Kikuchi H."/>
            <person name="Masuho Y."/>
            <person name="Yamashita R."/>
            <person name="Nakai K."/>
            <person name="Yada T."/>
            <person name="Nakamura Y."/>
            <person name="Ohara O."/>
            <person name="Isogai T."/>
            <person name="Sugano S."/>
        </authorList>
    </citation>
    <scope>NUCLEOTIDE SEQUENCE [LARGE SCALE MRNA] (ISOFORMS 1; 4 AND 5)</scope>
    <scope>VARIANT VAL-513</scope>
    <source>
        <tissue>Brain cortex</tissue>
        <tissue>Embryo</tissue>
        <tissue>Heart</tissue>
    </source>
</reference>
<reference key="2">
    <citation type="submission" date="2005-04" db="EMBL/GenBank/DDBJ databases">
        <authorList>
            <person name="Suzuki Y."/>
            <person name="Sugano S."/>
            <person name="Totoki Y."/>
            <person name="Toyoda A."/>
            <person name="Takeda T."/>
            <person name="Sakaki Y."/>
            <person name="Tanaka A."/>
            <person name="Yokoyama S."/>
        </authorList>
    </citation>
    <scope>NUCLEOTIDE SEQUENCE [LARGE SCALE MRNA] (ISOFORM 1)</scope>
    <scope>VARIANT VAL-513</scope>
</reference>
<reference key="3">
    <citation type="journal article" date="2001" name="Nature">
        <title>The DNA sequence and comparative analysis of human chromosome 20.</title>
        <authorList>
            <person name="Deloukas P."/>
            <person name="Matthews L.H."/>
            <person name="Ashurst J.L."/>
            <person name="Burton J."/>
            <person name="Gilbert J.G.R."/>
            <person name="Jones M."/>
            <person name="Stavrides G."/>
            <person name="Almeida J.P."/>
            <person name="Babbage A.K."/>
            <person name="Bagguley C.L."/>
            <person name="Bailey J."/>
            <person name="Barlow K.F."/>
            <person name="Bates K.N."/>
            <person name="Beard L.M."/>
            <person name="Beare D.M."/>
            <person name="Beasley O.P."/>
            <person name="Bird C.P."/>
            <person name="Blakey S.E."/>
            <person name="Bridgeman A.M."/>
            <person name="Brown A.J."/>
            <person name="Buck D."/>
            <person name="Burrill W.D."/>
            <person name="Butler A.P."/>
            <person name="Carder C."/>
            <person name="Carter N.P."/>
            <person name="Chapman J.C."/>
            <person name="Clamp M."/>
            <person name="Clark G."/>
            <person name="Clark L.N."/>
            <person name="Clark S.Y."/>
            <person name="Clee C.M."/>
            <person name="Clegg S."/>
            <person name="Cobley V.E."/>
            <person name="Collier R.E."/>
            <person name="Connor R.E."/>
            <person name="Corby N.R."/>
            <person name="Coulson A."/>
            <person name="Coville G.J."/>
            <person name="Deadman R."/>
            <person name="Dhami P.D."/>
            <person name="Dunn M."/>
            <person name="Ellington A.G."/>
            <person name="Frankland J.A."/>
            <person name="Fraser A."/>
            <person name="French L."/>
            <person name="Garner P."/>
            <person name="Grafham D.V."/>
            <person name="Griffiths C."/>
            <person name="Griffiths M.N.D."/>
            <person name="Gwilliam R."/>
            <person name="Hall R.E."/>
            <person name="Hammond S."/>
            <person name="Harley J.L."/>
            <person name="Heath P.D."/>
            <person name="Ho S."/>
            <person name="Holden J.L."/>
            <person name="Howden P.J."/>
            <person name="Huckle E."/>
            <person name="Hunt A.R."/>
            <person name="Hunt S.E."/>
            <person name="Jekosch K."/>
            <person name="Johnson C.M."/>
            <person name="Johnson D."/>
            <person name="Kay M.P."/>
            <person name="Kimberley A.M."/>
            <person name="King A."/>
            <person name="Knights A."/>
            <person name="Laird G.K."/>
            <person name="Lawlor S."/>
            <person name="Lehvaeslaiho M.H."/>
            <person name="Leversha M.A."/>
            <person name="Lloyd C."/>
            <person name="Lloyd D.M."/>
            <person name="Lovell J.D."/>
            <person name="Marsh V.L."/>
            <person name="Martin S.L."/>
            <person name="McConnachie L.J."/>
            <person name="McLay K."/>
            <person name="McMurray A.A."/>
            <person name="Milne S.A."/>
            <person name="Mistry D."/>
            <person name="Moore M.J.F."/>
            <person name="Mullikin J.C."/>
            <person name="Nickerson T."/>
            <person name="Oliver K."/>
            <person name="Parker A."/>
            <person name="Patel R."/>
            <person name="Pearce T.A.V."/>
            <person name="Peck A.I."/>
            <person name="Phillimore B.J.C.T."/>
            <person name="Prathalingam S.R."/>
            <person name="Plumb R.W."/>
            <person name="Ramsay H."/>
            <person name="Rice C.M."/>
            <person name="Ross M.T."/>
            <person name="Scott C.E."/>
            <person name="Sehra H.K."/>
            <person name="Shownkeen R."/>
            <person name="Sims S."/>
            <person name="Skuce C.D."/>
            <person name="Smith M.L."/>
            <person name="Soderlund C."/>
            <person name="Steward C.A."/>
            <person name="Sulston J.E."/>
            <person name="Swann R.M."/>
            <person name="Sycamore N."/>
            <person name="Taylor R."/>
            <person name="Tee L."/>
            <person name="Thomas D.W."/>
            <person name="Thorpe A."/>
            <person name="Tracey A."/>
            <person name="Tromans A.C."/>
            <person name="Vaudin M."/>
            <person name="Wall M."/>
            <person name="Wallis J.M."/>
            <person name="Whitehead S.L."/>
            <person name="Whittaker P."/>
            <person name="Willey D.L."/>
            <person name="Williams L."/>
            <person name="Williams S.A."/>
            <person name="Wilming L."/>
            <person name="Wray P.W."/>
            <person name="Hubbard T."/>
            <person name="Durbin R.M."/>
            <person name="Bentley D.R."/>
            <person name="Beck S."/>
            <person name="Rogers J."/>
        </authorList>
    </citation>
    <scope>NUCLEOTIDE SEQUENCE [LARGE SCALE GENOMIC DNA]</scope>
</reference>
<reference key="4">
    <citation type="submission" date="2005-09" db="EMBL/GenBank/DDBJ databases">
        <authorList>
            <person name="Mural R.J."/>
            <person name="Istrail S."/>
            <person name="Sutton G."/>
            <person name="Florea L."/>
            <person name="Halpern A.L."/>
            <person name="Mobarry C.M."/>
            <person name="Lippert R."/>
            <person name="Walenz B."/>
            <person name="Shatkay H."/>
            <person name="Dew I."/>
            <person name="Miller J.R."/>
            <person name="Flanigan M.J."/>
            <person name="Edwards N.J."/>
            <person name="Bolanos R."/>
            <person name="Fasulo D."/>
            <person name="Halldorsson B.V."/>
            <person name="Hannenhalli S."/>
            <person name="Turner R."/>
            <person name="Yooseph S."/>
            <person name="Lu F."/>
            <person name="Nusskern D.R."/>
            <person name="Shue B.C."/>
            <person name="Zheng X.H."/>
            <person name="Zhong F."/>
            <person name="Delcher A.L."/>
            <person name="Huson D.H."/>
            <person name="Kravitz S.A."/>
            <person name="Mouchard L."/>
            <person name="Reinert K."/>
            <person name="Remington K.A."/>
            <person name="Clark A.G."/>
            <person name="Waterman M.S."/>
            <person name="Eichler E.E."/>
            <person name="Adams M.D."/>
            <person name="Hunkapiller M.W."/>
            <person name="Myers E.W."/>
            <person name="Venter J.C."/>
        </authorList>
    </citation>
    <scope>NUCLEOTIDE SEQUENCE [LARGE SCALE GENOMIC DNA]</scope>
</reference>
<reference key="5">
    <citation type="journal article" date="2004" name="Genome Res.">
        <title>The status, quality, and expansion of the NIH full-length cDNA project: the Mammalian Gene Collection (MGC).</title>
        <authorList>
            <consortium name="The MGC Project Team"/>
        </authorList>
    </citation>
    <scope>NUCLEOTIDE SEQUENCE [LARGE SCALE MRNA] (ISOFORM 1)</scope>
    <source>
        <tissue>Pancreas</tissue>
    </source>
</reference>
<reference key="6">
    <citation type="journal article" date="2001" name="DNA Res.">
        <title>Prediction of the coding sequences of unidentified human genes. XXII. The complete sequences of 50 new cDNA clones which code for large proteins.</title>
        <authorList>
            <person name="Nagase T."/>
            <person name="Kikuno R."/>
            <person name="Ohara O."/>
        </authorList>
    </citation>
    <scope>NUCLEOTIDE SEQUENCE [LARGE SCALE MRNA] OF 51-523 (ISOFORM 2)</scope>
    <scope>TISSUE SPECIFICITY</scope>
    <source>
        <tissue>Brain</tissue>
    </source>
</reference>
<reference key="7">
    <citation type="journal article" date="2007" name="BMC Genomics">
        <title>The full-ORF clone resource of the German cDNA consortium.</title>
        <authorList>
            <person name="Bechtel S."/>
            <person name="Rosenfelder H."/>
            <person name="Duda A."/>
            <person name="Schmidt C.P."/>
            <person name="Ernst U."/>
            <person name="Wellenreuther R."/>
            <person name="Mehrle A."/>
            <person name="Schuster C."/>
            <person name="Bahr A."/>
            <person name="Bloecker H."/>
            <person name="Heubner D."/>
            <person name="Hoerlein A."/>
            <person name="Michel G."/>
            <person name="Wedler H."/>
            <person name="Koehrer K."/>
            <person name="Ottenwaelder B."/>
            <person name="Poustka A."/>
            <person name="Wiemann S."/>
            <person name="Schupp I."/>
        </authorList>
    </citation>
    <scope>NUCLEOTIDE SEQUENCE [LARGE SCALE MRNA] OF 51-523 (ISOFORM 3)</scope>
    <scope>VARIANT VAL-513</scope>
    <source>
        <tissue>Testis</tissue>
    </source>
</reference>
<sequence>MANVGLQFQASAGDSDPQSRPLLLLGQLHHLHRVPWSHVRGKLQPRVTEELWQAALSTLNPNPTDSCPLYLNYATVAALPCRVSRHNSPSAAHFITRLVRTCLPPGAHRCIVMVCEQPEVFASACALARAFPLFTHRSGASRRLEKKTVTVEFFLVGQDNGPVEVSTLQCLANATDGVRLAARIVDTPCNEMNTDTFLEEINKVGKELGIIPTIIRDEELKTRGFGGIYGVGKAALHPPALAVLSHTPDGATQTIAWVGKGIVYDTGGLSIKGKTTMPGMKRDCGGAAAVLGAFRAAIKQGFKDNLHAVFCLAENSVGPNATRPDDIHLLYSGKTVEINNTDAEGRLVLADGVSYACKDLGADIILDMATLTGAQGIATGKYHAAVLTNSAEWEAACVKAGRKCGDLVHPLVYCPELHFSEFTSAVADMKNSVADRDNSPSSCAGLFIASHIGFDWPGVWVHLDIAAPVHAGERATGFGVALLLALFGRASEDPLLNLVSPLGCEVDVEEGDLGRDSKRRRLV</sequence>
<organism>
    <name type="scientific">Homo sapiens</name>
    <name type="common">Human</name>
    <dbReference type="NCBI Taxonomy" id="9606"/>
    <lineage>
        <taxon>Eukaryota</taxon>
        <taxon>Metazoa</taxon>
        <taxon>Chordata</taxon>
        <taxon>Craniata</taxon>
        <taxon>Vertebrata</taxon>
        <taxon>Euteleostomi</taxon>
        <taxon>Mammalia</taxon>
        <taxon>Eutheria</taxon>
        <taxon>Euarchontoglires</taxon>
        <taxon>Primates</taxon>
        <taxon>Haplorrhini</taxon>
        <taxon>Catarrhini</taxon>
        <taxon>Hominidae</taxon>
        <taxon>Homo</taxon>
    </lineage>
</organism>
<evidence type="ECO:0000250" key="1"/>
<evidence type="ECO:0000255" key="2"/>
<evidence type="ECO:0000269" key="3">
    <source>
    </source>
</evidence>
<evidence type="ECO:0000269" key="4">
    <source>
    </source>
</evidence>
<evidence type="ECO:0000269" key="5">
    <source>
    </source>
</evidence>
<evidence type="ECO:0000269" key="6">
    <source ref="2"/>
</evidence>
<evidence type="ECO:0000303" key="7">
    <source>
    </source>
</evidence>
<evidence type="ECO:0000303" key="8">
    <source>
    </source>
</evidence>
<evidence type="ECO:0000303" key="9">
    <source>
    </source>
</evidence>
<evidence type="ECO:0000305" key="10"/>
<gene>
    <name type="primary">NPEPL1</name>
    <name type="synonym">KIAA1974</name>
</gene>
<comment type="function">
    <text>Probably catalyzes the removal of unsubstituted N-terminal amino acids from various peptides.</text>
</comment>
<comment type="cofactor">
    <cofactor>
        <name>Zn(2+)</name>
        <dbReference type="ChEBI" id="CHEBI:29105"/>
    </cofactor>
    <cofactor>
        <name>Mn(2+)</name>
        <dbReference type="ChEBI" id="CHEBI:29035"/>
    </cofactor>
</comment>
<comment type="interaction">
    <interactant intactId="EBI-10269715">
        <id>Q8NDH3-4</id>
    </interactant>
    <interactant intactId="EBI-717422">
        <id>Q12800</id>
        <label>TFCP2</label>
    </interactant>
    <organismsDiffer>false</organismsDiffer>
    <experiments>3</experiments>
</comment>
<comment type="interaction">
    <interactant intactId="EBI-12329915">
        <id>Q8NDH3-5</id>
    </interactant>
    <interactant intactId="EBI-718729">
        <id>P55212</id>
        <label>CASP6</label>
    </interactant>
    <organismsDiffer>false</organismsDiffer>
    <experiments>3</experiments>
</comment>
<comment type="interaction">
    <interactant intactId="EBI-12329915">
        <id>Q8NDH3-5</id>
    </interactant>
    <interactant intactId="EBI-473886">
        <id>O00291</id>
        <label>HIP1</label>
    </interactant>
    <organismsDiffer>false</organismsDiffer>
    <experiments>3</experiments>
</comment>
<comment type="interaction">
    <interactant intactId="EBI-12329915">
        <id>Q8NDH3-5</id>
    </interactant>
    <interactant intactId="EBI-21591415">
        <id>P13473-2</id>
        <label>LAMP2</label>
    </interactant>
    <organismsDiffer>false</organismsDiffer>
    <experiments>3</experiments>
</comment>
<comment type="interaction">
    <interactant intactId="EBI-12329915">
        <id>Q8NDH3-5</id>
    </interactant>
    <interactant intactId="EBI-724076">
        <id>Q99750</id>
        <label>MDFI</label>
    </interactant>
    <organismsDiffer>false</organismsDiffer>
    <experiments>3</experiments>
</comment>
<comment type="alternative products">
    <event type="alternative splicing"/>
    <isoform>
        <id>Q8NDH3-1</id>
        <name>1</name>
        <sequence type="displayed"/>
    </isoform>
    <isoform>
        <id>Q8NDH3-2</id>
        <name>2</name>
        <sequence type="described" ref="VSP_007253 VSP_007254"/>
    </isoform>
    <isoform>
        <id>Q8NDH3-3</id>
        <name>3</name>
        <sequence type="described" ref="VSP_007251 VSP_007252"/>
    </isoform>
    <isoform>
        <id>Q8NDH3-4</id>
        <name>4</name>
        <sequence type="described" ref="VSP_044526"/>
    </isoform>
    <isoform>
        <id>Q8NDH3-5</id>
        <name>5</name>
        <sequence type="described" ref="VSP_044527"/>
    </isoform>
</comment>
<comment type="tissue specificity">
    <text evidence="3">Ubiquitously expressed.</text>
</comment>
<comment type="similarity">
    <text evidence="10">Belongs to the peptidase M17 family.</text>
</comment>
<comment type="sequence caution" evidence="10">
    <conflict type="frameshift">
        <sequence resource="EMBL" id="AK307771"/>
    </conflict>
</comment>
<comment type="sequence caution" evidence="10">
    <conflict type="frameshift">
        <sequence resource="EMBL-CDS" id="BAB13861"/>
    </conflict>
</comment>
<comment type="sequence caution" evidence="10">
    <molecule>Isoform 2</molecule>
    <conflict type="frameshift">
        <sequence resource="EMBL-CDS" id="CAD38816"/>
    </conflict>
</comment>